<evidence type="ECO:0000255" key="1"/>
<evidence type="ECO:0000269" key="2">
    <source>
    </source>
</evidence>
<evidence type="ECO:0000269" key="3">
    <source>
    </source>
</evidence>
<evidence type="ECO:0000269" key="4">
    <source>
    </source>
</evidence>
<evidence type="ECO:0000269" key="5">
    <source>
    </source>
</evidence>
<evidence type="ECO:0000305" key="6"/>
<proteinExistence type="evidence at protein level"/>
<protein>
    <recommendedName>
        <fullName>Putative glycosyltransferase HOC1</fullName>
        <ecNumber>2.4.-.-</ecNumber>
    </recommendedName>
    <alternativeName>
        <fullName>M-Pol II subunit Hoc1p</fullName>
    </alternativeName>
    <alternativeName>
        <fullName>Mannan polymerase II complex HOC1 subunit</fullName>
    </alternativeName>
</protein>
<name>HOC1_YEAST</name>
<organism>
    <name type="scientific">Saccharomyces cerevisiae (strain ATCC 204508 / S288c)</name>
    <name type="common">Baker's yeast</name>
    <dbReference type="NCBI Taxonomy" id="559292"/>
    <lineage>
        <taxon>Eukaryota</taxon>
        <taxon>Fungi</taxon>
        <taxon>Dikarya</taxon>
        <taxon>Ascomycota</taxon>
        <taxon>Saccharomycotina</taxon>
        <taxon>Saccharomycetes</taxon>
        <taxon>Saccharomycetales</taxon>
        <taxon>Saccharomycetaceae</taxon>
        <taxon>Saccharomyces</taxon>
    </lineage>
</organism>
<feature type="initiator methionine" description="Removed" evidence="5">
    <location>
        <position position="1"/>
    </location>
</feature>
<feature type="chain" id="PRO_0000080564" description="Putative glycosyltransferase HOC1">
    <location>
        <begin position="2"/>
        <end position="396"/>
    </location>
</feature>
<feature type="topological domain" description="Cytoplasmic" evidence="1">
    <location>
        <begin position="2"/>
        <end position="13"/>
    </location>
</feature>
<feature type="transmembrane region" description="Helical; Signal-anchor for type II membrane protein" evidence="1">
    <location>
        <begin position="14"/>
        <end position="34"/>
    </location>
</feature>
<feature type="topological domain" description="Lumenal" evidence="1">
    <location>
        <begin position="35"/>
        <end position="396"/>
    </location>
</feature>
<feature type="glycosylation site" description="N-linked (GlcNAc...) asparagine" evidence="1">
    <location>
        <position position="37"/>
    </location>
</feature>
<feature type="sequence conflict" description="In Ref. 5; AAT92846." evidence="6" ref="5">
    <original>V</original>
    <variation>E</variation>
    <location>
        <position position="393"/>
    </location>
</feature>
<comment type="function">
    <text>The M-Pol II complex possesses alpha-1,6-mannosyltransferase activity and is probably involved in the elongation of the mannan backbone of N-linked glycans on cell wall and periplasmic proteins.</text>
</comment>
<comment type="subunit">
    <text evidence="4 5">Component of the M-Pol II complex composed of ANP1, MNN9, MNN10, MNN11 and HOC1.</text>
</comment>
<comment type="interaction">
    <interactant intactId="EBI-8430">
        <id>P47124</id>
    </interactant>
    <interactant intactId="EBI-2595">
        <id>P32629</id>
        <label>ANP1</label>
    </interactant>
    <organismsDiffer>false</organismsDiffer>
    <experiments>3</experiments>
</comment>
<comment type="interaction">
    <interactant intactId="EBI-8430">
        <id>P47124</id>
    </interactant>
    <interactant intactId="EBI-11043">
        <id>P50108</id>
        <label>MNN10</label>
    </interactant>
    <organismsDiffer>false</organismsDiffer>
    <experiments>4</experiments>
</comment>
<comment type="interaction">
    <interactant intactId="EBI-8430">
        <id>P47124</id>
    </interactant>
    <interactant intactId="EBI-11052">
        <id>P46985</id>
        <label>MNN11</label>
    </interactant>
    <organismsDiffer>false</organismsDiffer>
    <experiments>3</experiments>
</comment>
<comment type="subcellular location">
    <subcellularLocation>
        <location evidence="3 4">Golgi apparatus</location>
        <location evidence="3 4">cis-Golgi network membrane</location>
        <topology evidence="3 4">Single-pass type II membrane protein</topology>
    </subcellularLocation>
</comment>
<comment type="miscellaneous">
    <text evidence="2">Present with 7160 molecules/cell in log phase SD medium.</text>
</comment>
<comment type="similarity">
    <text evidence="6">Belongs to the glycosyltransferase 32 family.</text>
</comment>
<gene>
    <name type="primary">HOC1</name>
    <name type="ordered locus">YJR075W</name>
    <name type="ORF">J1830</name>
</gene>
<keyword id="KW-0903">Direct protein sequencing</keyword>
<keyword id="KW-0325">Glycoprotein</keyword>
<keyword id="KW-0328">Glycosyltransferase</keyword>
<keyword id="KW-0333">Golgi apparatus</keyword>
<keyword id="KW-0472">Membrane</keyword>
<keyword id="KW-1185">Reference proteome</keyword>
<keyword id="KW-0735">Signal-anchor</keyword>
<keyword id="KW-0808">Transferase</keyword>
<keyword id="KW-0812">Transmembrane</keyword>
<keyword id="KW-1133">Transmembrane helix</keyword>
<reference key="1">
    <citation type="journal article" date="1997" name="Genetics">
        <title>Saccharomyces cerevisiae HOC1, a suppressor of pkc1, encodes a putative glycosyltransferase.</title>
        <authorList>
            <person name="Neiman A.M."/>
            <person name="Mhaiskar V."/>
            <person name="Manus V."/>
            <person name="Galibert F."/>
            <person name="Dean N."/>
        </authorList>
    </citation>
    <scope>NUCLEOTIDE SEQUENCE [GENOMIC DNA]</scope>
    <scope>SUBCELLULAR LOCATION</scope>
</reference>
<reference key="2">
    <citation type="journal article" date="1996" name="Yeast">
        <title>Analysis of a 62 kb DNA sequence of chromosome X reveals 36 open reading frames and a gene cluster with a counterpart on chromosome XI.</title>
        <authorList>
            <person name="Huang M.-E."/>
            <person name="Manus V."/>
            <person name="Chuat J.-C."/>
            <person name="Galibert F."/>
        </authorList>
    </citation>
    <scope>NUCLEOTIDE SEQUENCE [GENOMIC DNA]</scope>
    <source>
        <strain>ATCC 204508 / S288c</strain>
    </source>
</reference>
<reference key="3">
    <citation type="journal article" date="1996" name="EMBO J.">
        <title>Complete nucleotide sequence of Saccharomyces cerevisiae chromosome X.</title>
        <authorList>
            <person name="Galibert F."/>
            <person name="Alexandraki D."/>
            <person name="Baur A."/>
            <person name="Boles E."/>
            <person name="Chalwatzis N."/>
            <person name="Chuat J.-C."/>
            <person name="Coster F."/>
            <person name="Cziepluch C."/>
            <person name="de Haan M."/>
            <person name="Domdey H."/>
            <person name="Durand P."/>
            <person name="Entian K.-D."/>
            <person name="Gatius M."/>
            <person name="Goffeau A."/>
            <person name="Grivell L.A."/>
            <person name="Hennemann A."/>
            <person name="Herbert C.J."/>
            <person name="Heumann K."/>
            <person name="Hilger F."/>
            <person name="Hollenberg C.P."/>
            <person name="Huang M.-E."/>
            <person name="Jacq C."/>
            <person name="Jauniaux J.-C."/>
            <person name="Katsoulou C."/>
            <person name="Kirchrath L."/>
            <person name="Kleine K."/>
            <person name="Kordes E."/>
            <person name="Koetter P."/>
            <person name="Liebl S."/>
            <person name="Louis E.J."/>
            <person name="Manus V."/>
            <person name="Mewes H.-W."/>
            <person name="Miosga T."/>
            <person name="Obermaier B."/>
            <person name="Perea J."/>
            <person name="Pohl T.M."/>
            <person name="Portetelle D."/>
            <person name="Pujol A."/>
            <person name="Purnelle B."/>
            <person name="Ramezani Rad M."/>
            <person name="Rasmussen S.W."/>
            <person name="Rose M."/>
            <person name="Rossau R."/>
            <person name="Schaaff-Gerstenschlaeger I."/>
            <person name="Smits P.H.M."/>
            <person name="Scarcez T."/>
            <person name="Soriano N."/>
            <person name="To Van D."/>
            <person name="Tzermia M."/>
            <person name="Van Broekhoven A."/>
            <person name="Vandenbol M."/>
            <person name="Wedler H."/>
            <person name="von Wettstein D."/>
            <person name="Wambutt R."/>
            <person name="Zagulski M."/>
            <person name="Zollner A."/>
            <person name="Karpfinger-Hartl L."/>
        </authorList>
    </citation>
    <scope>NUCLEOTIDE SEQUENCE [LARGE SCALE GENOMIC DNA]</scope>
    <source>
        <strain>ATCC 204508 / S288c</strain>
    </source>
</reference>
<reference key="4">
    <citation type="journal article" date="2014" name="G3 (Bethesda)">
        <title>The reference genome sequence of Saccharomyces cerevisiae: Then and now.</title>
        <authorList>
            <person name="Engel S.R."/>
            <person name="Dietrich F.S."/>
            <person name="Fisk D.G."/>
            <person name="Binkley G."/>
            <person name="Balakrishnan R."/>
            <person name="Costanzo M.C."/>
            <person name="Dwight S.S."/>
            <person name="Hitz B.C."/>
            <person name="Karra K."/>
            <person name="Nash R.S."/>
            <person name="Weng S."/>
            <person name="Wong E.D."/>
            <person name="Lloyd P."/>
            <person name="Skrzypek M.S."/>
            <person name="Miyasato S.R."/>
            <person name="Simison M."/>
            <person name="Cherry J.M."/>
        </authorList>
    </citation>
    <scope>GENOME REANNOTATION</scope>
    <source>
        <strain>ATCC 204508 / S288c</strain>
    </source>
</reference>
<reference key="5">
    <citation type="journal article" date="2007" name="Genome Res.">
        <title>Approaching a complete repository of sequence-verified protein-encoding clones for Saccharomyces cerevisiae.</title>
        <authorList>
            <person name="Hu Y."/>
            <person name="Rolfs A."/>
            <person name="Bhullar B."/>
            <person name="Murthy T.V.S."/>
            <person name="Zhu C."/>
            <person name="Berger M.F."/>
            <person name="Camargo A.A."/>
            <person name="Kelley F."/>
            <person name="McCarron S."/>
            <person name="Jepson D."/>
            <person name="Richardson A."/>
            <person name="Raphael J."/>
            <person name="Moreira D."/>
            <person name="Taycher E."/>
            <person name="Zuo D."/>
            <person name="Mohr S."/>
            <person name="Kane M.F."/>
            <person name="Williamson J."/>
            <person name="Simpson A.J.G."/>
            <person name="Bulyk M.L."/>
            <person name="Harlow E."/>
            <person name="Marsischky G."/>
            <person name="Kolodner R.D."/>
            <person name="LaBaer J."/>
        </authorList>
    </citation>
    <scope>NUCLEOTIDE SEQUENCE [GENOMIC DNA]</scope>
    <source>
        <strain>ATCC 204508 / S288c</strain>
    </source>
</reference>
<reference key="6">
    <citation type="journal article" date="1997" name="Biochem. Biophys. Res. Commun.">
        <title>Novel membrane protein complexes for protein glycosylation in the yeast Golgi apparatus.</title>
        <authorList>
            <person name="Hashimoto H."/>
            <person name="Yoda K."/>
        </authorList>
    </citation>
    <scope>PROTEIN SEQUENCE OF 2-11</scope>
    <scope>SUBUNIT</scope>
</reference>
<reference key="7">
    <citation type="journal article" date="1998" name="EMBO J.">
        <title>Multi-protein complexes in the cis Golgi of Saccharomyces cerevisiae with alpha-1,6-mannosyltransferase activity.</title>
        <authorList>
            <person name="Jungmann J."/>
            <person name="Munro S."/>
        </authorList>
    </citation>
    <scope>PARTIAL PROTEIN SEQUENCE</scope>
    <scope>SUBUNIT</scope>
    <scope>SUBCELLULAR LOCATION</scope>
    <scope>ACTIVITY OF M-POL II COMPLEX</scope>
</reference>
<reference key="8">
    <citation type="journal article" date="2003" name="Nature">
        <title>Global analysis of protein expression in yeast.</title>
        <authorList>
            <person name="Ghaemmaghami S."/>
            <person name="Huh W.-K."/>
            <person name="Bower K."/>
            <person name="Howson R.W."/>
            <person name="Belle A."/>
            <person name="Dephoure N."/>
            <person name="O'Shea E.K."/>
            <person name="Weissman J.S."/>
        </authorList>
    </citation>
    <scope>LEVEL OF PROTEIN EXPRESSION [LARGE SCALE ANALYSIS]</scope>
</reference>
<dbReference type="EC" id="2.4.-.-"/>
<dbReference type="EMBL" id="U62942">
    <property type="protein sequence ID" value="AAB49938.1"/>
    <property type="molecule type" value="Genomic_DNA"/>
</dbReference>
<dbReference type="EMBL" id="Z49575">
    <property type="protein sequence ID" value="CAA89603.1"/>
    <property type="molecule type" value="Genomic_DNA"/>
</dbReference>
<dbReference type="EMBL" id="L47993">
    <property type="protein sequence ID" value="AAB39300.1"/>
    <property type="molecule type" value="Genomic_DNA"/>
</dbReference>
<dbReference type="EMBL" id="AY692827">
    <property type="protein sequence ID" value="AAT92846.1"/>
    <property type="molecule type" value="Genomic_DNA"/>
</dbReference>
<dbReference type="EMBL" id="BK006943">
    <property type="protein sequence ID" value="DAA08861.1"/>
    <property type="molecule type" value="Genomic_DNA"/>
</dbReference>
<dbReference type="PIR" id="S57094">
    <property type="entry name" value="S57094"/>
</dbReference>
<dbReference type="RefSeq" id="NP_012609.3">
    <property type="nucleotide sequence ID" value="NM_001181733.3"/>
</dbReference>
<dbReference type="SMR" id="P47124"/>
<dbReference type="BioGRID" id="33831">
    <property type="interactions" value="569"/>
</dbReference>
<dbReference type="ComplexPortal" id="CPX-1839">
    <property type="entry name" value="alpha-1,6-mannosyltransferase complex, M-Pol II variant"/>
</dbReference>
<dbReference type="DIP" id="DIP-918N"/>
<dbReference type="FunCoup" id="P47124">
    <property type="interactions" value="136"/>
</dbReference>
<dbReference type="IntAct" id="P47124">
    <property type="interactions" value="28"/>
</dbReference>
<dbReference type="MINT" id="P47124"/>
<dbReference type="STRING" id="4932.YJR075W"/>
<dbReference type="CAZy" id="GT32">
    <property type="family name" value="Glycosyltransferase Family 32"/>
</dbReference>
<dbReference type="GlyCosmos" id="P47124">
    <property type="glycosylation" value="1 site, No reported glycans"/>
</dbReference>
<dbReference type="GlyGen" id="P47124">
    <property type="glycosylation" value="1 site"/>
</dbReference>
<dbReference type="iPTMnet" id="P47124"/>
<dbReference type="PaxDb" id="4932-YJR075W"/>
<dbReference type="PeptideAtlas" id="P47124"/>
<dbReference type="EnsemblFungi" id="YJR075W_mRNA">
    <property type="protein sequence ID" value="YJR075W"/>
    <property type="gene ID" value="YJR075W"/>
</dbReference>
<dbReference type="GeneID" id="853538"/>
<dbReference type="KEGG" id="sce:YJR075W"/>
<dbReference type="AGR" id="SGD:S000003836"/>
<dbReference type="SGD" id="S000003836">
    <property type="gene designation" value="HOC1"/>
</dbReference>
<dbReference type="VEuPathDB" id="FungiDB:YJR075W"/>
<dbReference type="eggNOG" id="ENOG502QW2I">
    <property type="taxonomic scope" value="Eukaryota"/>
</dbReference>
<dbReference type="GeneTree" id="ENSGT00940000176653"/>
<dbReference type="HOGENOM" id="CLU_022381_5_0_1"/>
<dbReference type="InParanoid" id="P47124"/>
<dbReference type="OMA" id="WIPENVS"/>
<dbReference type="OrthoDB" id="411251at2759"/>
<dbReference type="BioCyc" id="MetaCyc:YJR075W-MONOMER"/>
<dbReference type="BioCyc" id="YEAST:YJR075W-MONOMER"/>
<dbReference type="BioGRID-ORCS" id="853538">
    <property type="hits" value="0 hits in 10 CRISPR screens"/>
</dbReference>
<dbReference type="PRO" id="PR:P47124"/>
<dbReference type="Proteomes" id="UP000002311">
    <property type="component" value="Chromosome X"/>
</dbReference>
<dbReference type="RNAct" id="P47124">
    <property type="molecule type" value="protein"/>
</dbReference>
<dbReference type="GO" id="GO:0000136">
    <property type="term" value="C:mannan polymerase complex"/>
    <property type="evidence" value="ECO:0000314"/>
    <property type="project" value="UniProtKB"/>
</dbReference>
<dbReference type="GO" id="GO:0000009">
    <property type="term" value="F:alpha-1,6-mannosyltransferase activity"/>
    <property type="evidence" value="ECO:0000314"/>
    <property type="project" value="UniProtKB"/>
</dbReference>
<dbReference type="GO" id="GO:0000032">
    <property type="term" value="P:cell wall mannoprotein biosynthetic process"/>
    <property type="evidence" value="ECO:0000304"/>
    <property type="project" value="UniProtKB"/>
</dbReference>
<dbReference type="GO" id="GO:0006487">
    <property type="term" value="P:protein N-linked glycosylation"/>
    <property type="evidence" value="ECO:0000318"/>
    <property type="project" value="GO_Central"/>
</dbReference>
<dbReference type="GO" id="GO:0006080">
    <property type="term" value="P:substituted mannan metabolic process"/>
    <property type="evidence" value="ECO:0000304"/>
    <property type="project" value="SGD"/>
</dbReference>
<dbReference type="FunFam" id="3.90.550.20:FF:000002">
    <property type="entry name" value="Initiation-specific alpha-1,6-mannosyltransferase"/>
    <property type="match status" value="1"/>
</dbReference>
<dbReference type="Gene3D" id="3.90.550.20">
    <property type="match status" value="1"/>
</dbReference>
<dbReference type="InterPro" id="IPR007577">
    <property type="entry name" value="GlycoTrfase_DXD_sugar-bd_CS"/>
</dbReference>
<dbReference type="InterPro" id="IPR029044">
    <property type="entry name" value="Nucleotide-diphossugar_trans"/>
</dbReference>
<dbReference type="InterPro" id="IPR039367">
    <property type="entry name" value="Och1-like"/>
</dbReference>
<dbReference type="PANTHER" id="PTHR31834:SF11">
    <property type="entry name" value="GLYCOSYLTRANSFERASE HOC1-RELATED"/>
    <property type="match status" value="1"/>
</dbReference>
<dbReference type="PANTHER" id="PTHR31834">
    <property type="entry name" value="INITIATION-SPECIFIC ALPHA-1,6-MANNOSYLTRANSFERASE"/>
    <property type="match status" value="1"/>
</dbReference>
<dbReference type="Pfam" id="PF04488">
    <property type="entry name" value="Gly_transf_sug"/>
    <property type="match status" value="1"/>
</dbReference>
<dbReference type="SUPFAM" id="SSF53448">
    <property type="entry name" value="Nucleotide-diphospho-sugar transferases"/>
    <property type="match status" value="1"/>
</dbReference>
<sequence length="396" mass="46297">MAKTTKRASSFRRLMIFAIIALISLAFGVRYLFHNSNATDLQKILQNLPKEISQSINSANNIQSSDSDLVQHFESLAQEIRHQQEVQAKQFDKQRKILEKKIQDLKQTPPEATLRERIAMTFPYDSHVKFPAFIWQTWSNDEGPERVQDIKGMWESKNPGFAHEVLNHDVINALVHHYFYSIPEILETYEALPSIILKIDFFKYLILLVHGGVYADIDTFPVQPIPNWIPEELSPSDIGLIVGVEEDAQRADWRTKYIRRLQFGTWIIQAKPGHPVLREIISRIIETTLQRKRDDQLNVNLRNDLNIMSWTGSGLWTDTIFTYFNDFMRSGVREKVTWKLFHNLNQPKLLSDVLVFPKFSFNCPNQIDNDDPHKKFYFITHLASQFWKNTPKVEQK</sequence>
<accession>P47124</accession>
<accession>D6VWP5</accession>
<accession>E9P8X6</accession>